<name>AQPC_DICDI</name>
<proteinExistence type="evidence at transcript level"/>
<gene>
    <name type="primary">wacA</name>
    <name type="ORF">DDB_G0280537</name>
</gene>
<reference key="1">
    <citation type="journal article" date="1997" name="Gene">
        <title>The wacA gene of Dictyostelium discoideum is a developmentally regulated member of the MIP family.</title>
        <authorList>
            <person name="Flick K.M."/>
            <person name="Shaulsky G."/>
            <person name="Loomis W.F."/>
        </authorList>
    </citation>
    <scope>NUCLEOTIDE SEQUENCE [GENOMIC DNA]</scope>
    <scope>DEVELOPMENTAL STAGE</scope>
    <source>
        <strain>AX4</strain>
    </source>
</reference>
<reference key="2">
    <citation type="journal article" date="2005" name="Nature">
        <title>The genome of the social amoeba Dictyostelium discoideum.</title>
        <authorList>
            <person name="Eichinger L."/>
            <person name="Pachebat J.A."/>
            <person name="Gloeckner G."/>
            <person name="Rajandream M.A."/>
            <person name="Sucgang R."/>
            <person name="Berriman M."/>
            <person name="Song J."/>
            <person name="Olsen R."/>
            <person name="Szafranski K."/>
            <person name="Xu Q."/>
            <person name="Tunggal B."/>
            <person name="Kummerfeld S."/>
            <person name="Madera M."/>
            <person name="Konfortov B.A."/>
            <person name="Rivero F."/>
            <person name="Bankier A.T."/>
            <person name="Lehmann R."/>
            <person name="Hamlin N."/>
            <person name="Davies R."/>
            <person name="Gaudet P."/>
            <person name="Fey P."/>
            <person name="Pilcher K."/>
            <person name="Chen G."/>
            <person name="Saunders D."/>
            <person name="Sodergren E.J."/>
            <person name="Davis P."/>
            <person name="Kerhornou A."/>
            <person name="Nie X."/>
            <person name="Hall N."/>
            <person name="Anjard C."/>
            <person name="Hemphill L."/>
            <person name="Bason N."/>
            <person name="Farbrother P."/>
            <person name="Desany B."/>
            <person name="Just E."/>
            <person name="Morio T."/>
            <person name="Rost R."/>
            <person name="Churcher C.M."/>
            <person name="Cooper J."/>
            <person name="Haydock S."/>
            <person name="van Driessche N."/>
            <person name="Cronin A."/>
            <person name="Goodhead I."/>
            <person name="Muzny D.M."/>
            <person name="Mourier T."/>
            <person name="Pain A."/>
            <person name="Lu M."/>
            <person name="Harper D."/>
            <person name="Lindsay R."/>
            <person name="Hauser H."/>
            <person name="James K.D."/>
            <person name="Quiles M."/>
            <person name="Madan Babu M."/>
            <person name="Saito T."/>
            <person name="Buchrieser C."/>
            <person name="Wardroper A."/>
            <person name="Felder M."/>
            <person name="Thangavelu M."/>
            <person name="Johnson D."/>
            <person name="Knights A."/>
            <person name="Loulseged H."/>
            <person name="Mungall K.L."/>
            <person name="Oliver K."/>
            <person name="Price C."/>
            <person name="Quail M.A."/>
            <person name="Urushihara H."/>
            <person name="Hernandez J."/>
            <person name="Rabbinowitsch E."/>
            <person name="Steffen D."/>
            <person name="Sanders M."/>
            <person name="Ma J."/>
            <person name="Kohara Y."/>
            <person name="Sharp S."/>
            <person name="Simmonds M.N."/>
            <person name="Spiegler S."/>
            <person name="Tivey A."/>
            <person name="Sugano S."/>
            <person name="White B."/>
            <person name="Walker D."/>
            <person name="Woodward J.R."/>
            <person name="Winckler T."/>
            <person name="Tanaka Y."/>
            <person name="Shaulsky G."/>
            <person name="Schleicher M."/>
            <person name="Weinstock G.M."/>
            <person name="Rosenthal A."/>
            <person name="Cox E.C."/>
            <person name="Chisholm R.L."/>
            <person name="Gibbs R.A."/>
            <person name="Loomis W.F."/>
            <person name="Platzer M."/>
            <person name="Kay R.R."/>
            <person name="Williams J.G."/>
            <person name="Dear P.H."/>
            <person name="Noegel A.A."/>
            <person name="Barrell B.G."/>
            <person name="Kuspa A."/>
        </authorList>
    </citation>
    <scope>NUCLEOTIDE SEQUENCE [LARGE SCALE GENOMIC DNA]</scope>
    <source>
        <strain>AX4</strain>
    </source>
</reference>
<feature type="chain" id="PRO_0000327506" description="Aquaporin C">
    <location>
        <begin position="1"/>
        <end position="274"/>
    </location>
</feature>
<feature type="topological domain" description="Cytoplasmic" evidence="2">
    <location>
        <begin position="1"/>
        <end position="33"/>
    </location>
</feature>
<feature type="transmembrane region" description="Helical" evidence="2">
    <location>
        <begin position="34"/>
        <end position="54"/>
    </location>
</feature>
<feature type="topological domain" description="Extracellular" evidence="2">
    <location>
        <begin position="55"/>
        <end position="66"/>
    </location>
</feature>
<feature type="transmembrane region" description="Helical" evidence="2">
    <location>
        <begin position="67"/>
        <end position="87"/>
    </location>
</feature>
<feature type="topological domain" description="Cytoplasmic" evidence="2">
    <location>
        <begin position="88"/>
        <end position="105"/>
    </location>
</feature>
<feature type="transmembrane region" description="Helical" evidence="2">
    <location>
        <begin position="106"/>
        <end position="126"/>
    </location>
</feature>
<feature type="topological domain" description="Extracellular" evidence="2">
    <location>
        <begin position="127"/>
        <end position="154"/>
    </location>
</feature>
<feature type="transmembrane region" description="Helical" evidence="2">
    <location>
        <begin position="155"/>
        <end position="175"/>
    </location>
</feature>
<feature type="topological domain" description="Cytoplasmic" evidence="2">
    <location>
        <begin position="176"/>
        <end position="185"/>
    </location>
</feature>
<feature type="transmembrane region" description="Helical" evidence="2">
    <location>
        <begin position="186"/>
        <end position="206"/>
    </location>
</feature>
<feature type="topological domain" description="Extracellular" evidence="2">
    <location>
        <begin position="207"/>
        <end position="229"/>
    </location>
</feature>
<feature type="transmembrane region" description="Helical" evidence="2">
    <location>
        <begin position="230"/>
        <end position="250"/>
    </location>
</feature>
<feature type="topological domain" description="Cytoplasmic" evidence="2">
    <location>
        <begin position="251"/>
        <end position="274"/>
    </location>
</feature>
<feature type="short sequence motif" description="NPA 1">
    <location>
        <begin position="93"/>
        <end position="95"/>
    </location>
</feature>
<feature type="short sequence motif" description="NPA 2">
    <location>
        <begin position="211"/>
        <end position="213"/>
    </location>
</feature>
<feature type="sequence conflict" description="In Ref. 1; AAB72014." evidence="4" ref="1">
    <original>W</original>
    <variation>WDPR</variation>
    <location>
        <position position="179"/>
    </location>
</feature>
<organism>
    <name type="scientific">Dictyostelium discoideum</name>
    <name type="common">Social amoeba</name>
    <dbReference type="NCBI Taxonomy" id="44689"/>
    <lineage>
        <taxon>Eukaryota</taxon>
        <taxon>Amoebozoa</taxon>
        <taxon>Evosea</taxon>
        <taxon>Eumycetozoa</taxon>
        <taxon>Dictyostelia</taxon>
        <taxon>Dictyosteliales</taxon>
        <taxon>Dictyosteliaceae</taxon>
        <taxon>Dictyostelium</taxon>
    </lineage>
</organism>
<sequence length="274" mass="29855">MPFLHLFTPYTNADNTKLILRVNESRLRLFTRQLLAEFFGTLFVVYIVSGSTLAANFAVSDPIVRVCLICLVQGFAFAAIIWSISGISGCQLNPAVTVGCVTTGRMGILNGIAFIIFQCVGALVGAGMMKASLPTFYERDLSATTLATGVNVARGFFLEMVTTSFLVFVVLGVAVYNEWDPKISRVAPLAIGCAVIAGVGFLNLFTGGSLNPARSFGPAVFSDTWHRHYIYWFGPICGGIIAGLFWRIFLSEKVLLIDRPYTDFHRSTYGTATK</sequence>
<evidence type="ECO:0000250" key="1"/>
<evidence type="ECO:0000255" key="2"/>
<evidence type="ECO:0000269" key="3">
    <source>
    </source>
</evidence>
<evidence type="ECO:0000305" key="4"/>
<protein>
    <recommendedName>
        <fullName>Aquaporin C</fullName>
    </recommendedName>
    <alternativeName>
        <fullName>Aquaporin-like protein wacA</fullName>
    </alternativeName>
    <alternativeName>
        <fullName>Water channel protein A</fullName>
    </alternativeName>
</protein>
<dbReference type="EMBL" id="U68246">
    <property type="protein sequence ID" value="AAB72014.1"/>
    <property type="molecule type" value="Genomic_DNA"/>
</dbReference>
<dbReference type="EMBL" id="AAFI02000037">
    <property type="protein sequence ID" value="EAL67070.1"/>
    <property type="molecule type" value="Genomic_DNA"/>
</dbReference>
<dbReference type="RefSeq" id="XP_641078.1">
    <property type="nucleotide sequence ID" value="XM_635986.1"/>
</dbReference>
<dbReference type="SMR" id="Q54V53"/>
<dbReference type="FunCoup" id="Q54V53">
    <property type="interactions" value="34"/>
</dbReference>
<dbReference type="STRING" id="44689.Q54V53"/>
<dbReference type="GlyGen" id="Q54V53">
    <property type="glycosylation" value="1 site"/>
</dbReference>
<dbReference type="PaxDb" id="44689-DDB0214915"/>
<dbReference type="EnsemblProtists" id="EAL67070">
    <property type="protein sequence ID" value="EAL67070"/>
    <property type="gene ID" value="DDB_G0280537"/>
</dbReference>
<dbReference type="GeneID" id="8622637"/>
<dbReference type="KEGG" id="ddi:DDB_G0280537"/>
<dbReference type="dictyBase" id="DDB_G0280537">
    <property type="gene designation" value="wacA"/>
</dbReference>
<dbReference type="VEuPathDB" id="AmoebaDB:DDB_G0280537"/>
<dbReference type="eggNOG" id="KOG0223">
    <property type="taxonomic scope" value="Eukaryota"/>
</dbReference>
<dbReference type="HOGENOM" id="CLU_020019_3_3_1"/>
<dbReference type="InParanoid" id="Q54V53"/>
<dbReference type="OMA" id="VPTAMFY"/>
<dbReference type="PhylomeDB" id="Q54V53"/>
<dbReference type="Reactome" id="R-DDI-1237044">
    <property type="pathway name" value="Erythrocytes take up carbon dioxide and release oxygen"/>
</dbReference>
<dbReference type="Reactome" id="R-DDI-1247673">
    <property type="pathway name" value="Erythrocytes take up oxygen and release carbon dioxide"/>
</dbReference>
<dbReference type="Reactome" id="R-DDI-432040">
    <property type="pathway name" value="Vasopressin regulates renal water homeostasis via Aquaporins"/>
</dbReference>
<dbReference type="Reactome" id="R-DDI-432047">
    <property type="pathway name" value="Passive transport by Aquaporins"/>
</dbReference>
<dbReference type="PRO" id="PR:Q54V53"/>
<dbReference type="Proteomes" id="UP000002195">
    <property type="component" value="Chromosome 3"/>
</dbReference>
<dbReference type="GO" id="GO:0005886">
    <property type="term" value="C:plasma membrane"/>
    <property type="evidence" value="ECO:0000318"/>
    <property type="project" value="GO_Central"/>
</dbReference>
<dbReference type="GO" id="GO:0015250">
    <property type="term" value="F:water channel activity"/>
    <property type="evidence" value="ECO:0000318"/>
    <property type="project" value="GO_Central"/>
</dbReference>
<dbReference type="GO" id="GO:0006833">
    <property type="term" value="P:water transport"/>
    <property type="evidence" value="ECO:0000318"/>
    <property type="project" value="GO_Central"/>
</dbReference>
<dbReference type="FunFam" id="1.20.1080.10:FF:000062">
    <property type="entry name" value="Aquaporin A"/>
    <property type="match status" value="1"/>
</dbReference>
<dbReference type="Gene3D" id="1.20.1080.10">
    <property type="entry name" value="Glycerol uptake facilitator protein"/>
    <property type="match status" value="1"/>
</dbReference>
<dbReference type="InterPro" id="IPR023271">
    <property type="entry name" value="Aquaporin-like"/>
</dbReference>
<dbReference type="InterPro" id="IPR034294">
    <property type="entry name" value="Aquaporin_transptr"/>
</dbReference>
<dbReference type="InterPro" id="IPR000425">
    <property type="entry name" value="MIP"/>
</dbReference>
<dbReference type="InterPro" id="IPR022357">
    <property type="entry name" value="MIP_CS"/>
</dbReference>
<dbReference type="PANTHER" id="PTHR19139">
    <property type="entry name" value="AQUAPORIN TRANSPORTER"/>
    <property type="match status" value="1"/>
</dbReference>
<dbReference type="PANTHER" id="PTHR19139:SF199">
    <property type="entry name" value="MIP17260P"/>
    <property type="match status" value="1"/>
</dbReference>
<dbReference type="Pfam" id="PF00230">
    <property type="entry name" value="MIP"/>
    <property type="match status" value="1"/>
</dbReference>
<dbReference type="PRINTS" id="PR00783">
    <property type="entry name" value="MINTRINSICP"/>
</dbReference>
<dbReference type="SUPFAM" id="SSF81338">
    <property type="entry name" value="Aquaporin-like"/>
    <property type="match status" value="1"/>
</dbReference>
<dbReference type="PROSITE" id="PS00221">
    <property type="entry name" value="MIP"/>
    <property type="match status" value="1"/>
</dbReference>
<accession>Q54V53</accession>
<accession>Q94495</accession>
<comment type="function">
    <text evidence="1">May form a water-specific channel.</text>
</comment>
<comment type="subcellular location">
    <subcellularLocation>
        <location evidence="1">Cell membrane</location>
        <topology evidence="1">Multi-pass membrane protein</topology>
    </subcellularLocation>
</comment>
<comment type="developmental stage">
    <text evidence="3">First detected after 12 hours of development. Highly expressed after this throughout the development of the fruiting body. Detected exclusively in prespore cells, but not in prestalk cells.</text>
</comment>
<comment type="domain">
    <text>Aquaporins contain two tandem repeats each containing three membrane-spanning domains and a pore-forming loop with the signature motif Asn-Pro-Ala (NPA).</text>
</comment>
<comment type="similarity">
    <text evidence="4">Belongs to the MIP/aquaporin (TC 1.A.8) family.</text>
</comment>
<keyword id="KW-1003">Cell membrane</keyword>
<keyword id="KW-0472">Membrane</keyword>
<keyword id="KW-1185">Reference proteome</keyword>
<keyword id="KW-0677">Repeat</keyword>
<keyword id="KW-0812">Transmembrane</keyword>
<keyword id="KW-1133">Transmembrane helix</keyword>
<keyword id="KW-0813">Transport</keyword>